<evidence type="ECO:0000255" key="1">
    <source>
        <dbReference type="HAMAP-Rule" id="MF_00182"/>
    </source>
</evidence>
<proteinExistence type="inferred from homology"/>
<comment type="function">
    <text evidence="1">Attaches a formyl group to the free amino group of methionyl-tRNA(fMet). The formyl group appears to play a dual role in the initiator identity of N-formylmethionyl-tRNA by promoting its recognition by IF2 and preventing the misappropriation of this tRNA by the elongation apparatus.</text>
</comment>
<comment type="catalytic activity">
    <reaction evidence="1">
        <text>L-methionyl-tRNA(fMet) + (6R)-10-formyltetrahydrofolate = N-formyl-L-methionyl-tRNA(fMet) + (6S)-5,6,7,8-tetrahydrofolate + H(+)</text>
        <dbReference type="Rhea" id="RHEA:24380"/>
        <dbReference type="Rhea" id="RHEA-COMP:9952"/>
        <dbReference type="Rhea" id="RHEA-COMP:9953"/>
        <dbReference type="ChEBI" id="CHEBI:15378"/>
        <dbReference type="ChEBI" id="CHEBI:57453"/>
        <dbReference type="ChEBI" id="CHEBI:78530"/>
        <dbReference type="ChEBI" id="CHEBI:78844"/>
        <dbReference type="ChEBI" id="CHEBI:195366"/>
        <dbReference type="EC" id="2.1.2.9"/>
    </reaction>
</comment>
<comment type="similarity">
    <text evidence="1">Belongs to the Fmt family.</text>
</comment>
<feature type="chain" id="PRO_1000020096" description="Methionyl-tRNA formyltransferase">
    <location>
        <begin position="1"/>
        <end position="311"/>
    </location>
</feature>
<feature type="binding site" evidence="1">
    <location>
        <begin position="112"/>
        <end position="115"/>
    </location>
    <ligand>
        <name>(6S)-5,6,7,8-tetrahydrofolate</name>
        <dbReference type="ChEBI" id="CHEBI:57453"/>
    </ligand>
</feature>
<protein>
    <recommendedName>
        <fullName evidence="1">Methionyl-tRNA formyltransferase</fullName>
        <ecNumber evidence="1">2.1.2.9</ecNumber>
    </recommendedName>
</protein>
<organism>
    <name type="scientific">Chelativorans sp. (strain BNC1)</name>
    <dbReference type="NCBI Taxonomy" id="266779"/>
    <lineage>
        <taxon>Bacteria</taxon>
        <taxon>Pseudomonadati</taxon>
        <taxon>Pseudomonadota</taxon>
        <taxon>Alphaproteobacteria</taxon>
        <taxon>Hyphomicrobiales</taxon>
        <taxon>Phyllobacteriaceae</taxon>
        <taxon>Chelativorans</taxon>
    </lineage>
</organism>
<gene>
    <name evidence="1" type="primary">fmt</name>
    <name type="ordered locus">Meso_0393</name>
</gene>
<reference key="1">
    <citation type="submission" date="2006-06" db="EMBL/GenBank/DDBJ databases">
        <title>Complete sequence of chromosome of Mesorhizobium sp. BNC1.</title>
        <authorList>
            <consortium name="US DOE Joint Genome Institute"/>
            <person name="Copeland A."/>
            <person name="Lucas S."/>
            <person name="Lapidus A."/>
            <person name="Barry K."/>
            <person name="Detter J.C."/>
            <person name="Glavina del Rio T."/>
            <person name="Hammon N."/>
            <person name="Israni S."/>
            <person name="Dalin E."/>
            <person name="Tice H."/>
            <person name="Pitluck S."/>
            <person name="Chertkov O."/>
            <person name="Brettin T."/>
            <person name="Bruce D."/>
            <person name="Han C."/>
            <person name="Tapia R."/>
            <person name="Gilna P."/>
            <person name="Schmutz J."/>
            <person name="Larimer F."/>
            <person name="Land M."/>
            <person name="Hauser L."/>
            <person name="Kyrpides N."/>
            <person name="Mikhailova N."/>
            <person name="Richardson P."/>
        </authorList>
    </citation>
    <scope>NUCLEOTIDE SEQUENCE [LARGE SCALE GENOMIC DNA]</scope>
    <source>
        <strain>BNC1</strain>
    </source>
</reference>
<dbReference type="EC" id="2.1.2.9" evidence="1"/>
<dbReference type="EMBL" id="CP000390">
    <property type="protein sequence ID" value="ABG61797.1"/>
    <property type="molecule type" value="Genomic_DNA"/>
</dbReference>
<dbReference type="SMR" id="Q11LC8"/>
<dbReference type="STRING" id="266779.Meso_0393"/>
<dbReference type="KEGG" id="mes:Meso_0393"/>
<dbReference type="eggNOG" id="COG0223">
    <property type="taxonomic scope" value="Bacteria"/>
</dbReference>
<dbReference type="HOGENOM" id="CLU_033347_1_2_5"/>
<dbReference type="OrthoDB" id="9802815at2"/>
<dbReference type="GO" id="GO:0005829">
    <property type="term" value="C:cytosol"/>
    <property type="evidence" value="ECO:0007669"/>
    <property type="project" value="TreeGrafter"/>
</dbReference>
<dbReference type="GO" id="GO:0004479">
    <property type="term" value="F:methionyl-tRNA formyltransferase activity"/>
    <property type="evidence" value="ECO:0007669"/>
    <property type="project" value="UniProtKB-UniRule"/>
</dbReference>
<dbReference type="CDD" id="cd08646">
    <property type="entry name" value="FMT_core_Met-tRNA-FMT_N"/>
    <property type="match status" value="1"/>
</dbReference>
<dbReference type="CDD" id="cd08704">
    <property type="entry name" value="Met_tRNA_FMT_C"/>
    <property type="match status" value="1"/>
</dbReference>
<dbReference type="Gene3D" id="3.10.25.10">
    <property type="entry name" value="Formyl transferase, C-terminal domain"/>
    <property type="match status" value="1"/>
</dbReference>
<dbReference type="Gene3D" id="3.40.50.170">
    <property type="entry name" value="Formyl transferase, N-terminal domain"/>
    <property type="match status" value="1"/>
</dbReference>
<dbReference type="HAMAP" id="MF_00182">
    <property type="entry name" value="Formyl_trans"/>
    <property type="match status" value="1"/>
</dbReference>
<dbReference type="InterPro" id="IPR005794">
    <property type="entry name" value="Fmt"/>
</dbReference>
<dbReference type="InterPro" id="IPR005793">
    <property type="entry name" value="Formyl_trans_C"/>
</dbReference>
<dbReference type="InterPro" id="IPR037022">
    <property type="entry name" value="Formyl_trans_C_sf"/>
</dbReference>
<dbReference type="InterPro" id="IPR002376">
    <property type="entry name" value="Formyl_transf_N"/>
</dbReference>
<dbReference type="InterPro" id="IPR036477">
    <property type="entry name" value="Formyl_transf_N_sf"/>
</dbReference>
<dbReference type="InterPro" id="IPR011034">
    <property type="entry name" value="Formyl_transferase-like_C_sf"/>
</dbReference>
<dbReference type="InterPro" id="IPR001555">
    <property type="entry name" value="GART_AS"/>
</dbReference>
<dbReference type="InterPro" id="IPR044135">
    <property type="entry name" value="Met-tRNA-FMT_C"/>
</dbReference>
<dbReference type="InterPro" id="IPR041711">
    <property type="entry name" value="Met-tRNA-FMT_N"/>
</dbReference>
<dbReference type="NCBIfam" id="TIGR00460">
    <property type="entry name" value="fmt"/>
    <property type="match status" value="1"/>
</dbReference>
<dbReference type="PANTHER" id="PTHR11138">
    <property type="entry name" value="METHIONYL-TRNA FORMYLTRANSFERASE"/>
    <property type="match status" value="1"/>
</dbReference>
<dbReference type="PANTHER" id="PTHR11138:SF5">
    <property type="entry name" value="METHIONYL-TRNA FORMYLTRANSFERASE, MITOCHONDRIAL"/>
    <property type="match status" value="1"/>
</dbReference>
<dbReference type="Pfam" id="PF02911">
    <property type="entry name" value="Formyl_trans_C"/>
    <property type="match status" value="1"/>
</dbReference>
<dbReference type="Pfam" id="PF00551">
    <property type="entry name" value="Formyl_trans_N"/>
    <property type="match status" value="1"/>
</dbReference>
<dbReference type="SUPFAM" id="SSF50486">
    <property type="entry name" value="FMT C-terminal domain-like"/>
    <property type="match status" value="1"/>
</dbReference>
<dbReference type="SUPFAM" id="SSF53328">
    <property type="entry name" value="Formyltransferase"/>
    <property type="match status" value="1"/>
</dbReference>
<dbReference type="PROSITE" id="PS00373">
    <property type="entry name" value="GART"/>
    <property type="match status" value="1"/>
</dbReference>
<accession>Q11LC8</accession>
<keyword id="KW-0648">Protein biosynthesis</keyword>
<keyword id="KW-0808">Transferase</keyword>
<sequence length="311" mass="33208">MTLRLVFMGTPEFSVPTLRALAGAGHEITAIYTQPPRPAGRRGLELTRSPVHQAAEELDLYVRTPQSLKSEEEQQVFRELEADAAVVVAYGLLLPRAILEGTRLGAFNGHASLLPRWRGAAPIQRAIMAGDRETGMMVMKMDEGLDTGPIAMTEKIAIGPDMTAGELHDVMKLAGAGLMVAAIAALEQGELALTPQPATGVTYAKKIIKEETRVDWSRPAEEVHNHIRGLSPLPGAWCEMPAGDKAERVKLLRSTLSEGSGAPGEVIDEGLAIACGQGAVRLLELQRAGGKPVSAADFQRGSKLGRGTRLT</sequence>
<name>FMT_CHESB</name>